<evidence type="ECO:0000269" key="1">
    <source>
    </source>
</evidence>
<evidence type="ECO:0000303" key="2">
    <source>
    </source>
</evidence>
<evidence type="ECO:0000305" key="3"/>
<evidence type="ECO:0000312" key="4">
    <source>
        <dbReference type="EMBL" id="AFZ50074.1"/>
    </source>
</evidence>
<dbReference type="EMBL" id="CP003944">
    <property type="protein sequence ID" value="AFZ50074.1"/>
    <property type="molecule type" value="Genomic_DNA"/>
</dbReference>
<dbReference type="RefSeq" id="WP_015229079.1">
    <property type="nucleotide sequence ID" value="NC_019780.1"/>
</dbReference>
<dbReference type="SMR" id="P81002"/>
<dbReference type="STRING" id="13035.Dacsa_1380"/>
<dbReference type="KEGG" id="dsl:Dacsa_1380"/>
<dbReference type="HOGENOM" id="CLU_1988952_0_0_3"/>
<dbReference type="OrthoDB" id="587575at2"/>
<dbReference type="Proteomes" id="UP000010482">
    <property type="component" value="Chromosome"/>
</dbReference>
<dbReference type="GO" id="GO:0031411">
    <property type="term" value="C:gas vesicle"/>
    <property type="evidence" value="ECO:0000314"/>
    <property type="project" value="UniProtKB"/>
</dbReference>
<gene>
    <name evidence="4" type="ORF">Dacsa_1380</name>
</gene>
<organism>
    <name type="scientific">Dactylococcopsis salina (strain PCC 8305)</name>
    <name type="common">Myxobactron salinum</name>
    <dbReference type="NCBI Taxonomy" id="13035"/>
    <lineage>
        <taxon>Bacteria</taxon>
        <taxon>Bacillati</taxon>
        <taxon>Cyanobacteriota</taxon>
        <taxon>Cyanophyceae</taxon>
        <taxon>Synechococcales</taxon>
        <taxon>Synechococcaceae</taxon>
        <taxon>Dactylococcopsis</taxon>
    </lineage>
</organism>
<protein>
    <recommendedName>
        <fullName evidence="2">17 kDa gas vesicle protein</fullName>
    </recommendedName>
</protein>
<feature type="initiator methionine" description="Removed" evidence="1">
    <location>
        <position position="1"/>
    </location>
</feature>
<feature type="chain" id="PRO_0000182669" description="17 kDa gas vesicle protein">
    <location>
        <begin position="2"/>
        <end position="125"/>
    </location>
</feature>
<feature type="sequence conflict" description="In Ref. 2; AA sequence." evidence="3" ref="2">
    <original>R</original>
    <variation>L</variation>
    <location>
        <position position="39"/>
    </location>
</feature>
<feature type="sequence conflict" description="In Ref. 2; AA sequence." evidence="3" ref="2">
    <original>S</original>
    <variation>L</variation>
    <location>
        <position position="65"/>
    </location>
</feature>
<name>GVP17_DACS8</name>
<accession>P81002</accession>
<accession>K9YT51</accession>
<proteinExistence type="evidence at protein level"/>
<keyword id="KW-0903">Direct protein sequencing</keyword>
<keyword id="KW-0304">Gas vesicle</keyword>
<sequence>MVSLREQWNEQARERQREISARKTETVALLQEANQERVRVAQQQKALAIELKNQLAQFHEQLETSVGNWRQETQEQLINLEETRTANAQQQREALFNFRRQLTADVWGETESDSLKVEENTPFVA</sequence>
<comment type="function">
    <text evidence="2">Gas vesicles (GV) are hollow, gas filled proteinaceous nanostructures. During planktonic growth they allow positioning of the organism at a favorable depth for light or nutrient acquisition.</text>
</comment>
<comment type="subcellular location">
    <subcellularLocation>
        <location evidence="1">Gas vesicle</location>
    </subcellularLocation>
    <text evidence="1">Binds to the external surface of the gas vesicle.</text>
</comment>
<comment type="similarity">
    <text evidence="2">Belongs to the gas vesicle GvpC family.</text>
</comment>
<reference evidence="4" key="1">
    <citation type="submission" date="2012-04" db="EMBL/GenBank/DDBJ databases">
        <title>Finished genome of Dactylococcopsis salina PCC 8305.</title>
        <authorList>
            <consortium name="US DOE Joint Genome Institute"/>
            <person name="Gugger M."/>
            <person name="Coursin T."/>
            <person name="Rippka R."/>
            <person name="Tandeau De Marsac N."/>
            <person name="Huntemann M."/>
            <person name="Wei C.-L."/>
            <person name="Han J."/>
            <person name="Detter J.C."/>
            <person name="Han C."/>
            <person name="Tapia R."/>
            <person name="Daligault H."/>
            <person name="Chen A."/>
            <person name="Krypides N."/>
            <person name="Mavromatis K."/>
            <person name="Markowitz V."/>
            <person name="Szeto E."/>
            <person name="Ivanova N."/>
            <person name="Ovchinnikova G."/>
            <person name="Pagani I."/>
            <person name="Pati A."/>
            <person name="Goodwin L."/>
            <person name="Peters L."/>
            <person name="Pitluck S."/>
            <person name="Woyke T."/>
            <person name="Kerfeld C."/>
        </authorList>
    </citation>
    <scope>NUCLEOTIDE SEQUENCE [LARGE SCALE GENOMIC DNA]</scope>
    <source>
        <strain>PCC 8305</strain>
    </source>
</reference>
<reference evidence="3" key="2">
    <citation type="journal article" date="1992" name="J. Gen. Microbiol.">
        <title>The homologies of gas vesicle proteins.</title>
        <authorList>
            <person name="Griffiths A.E."/>
            <person name="Walsby A.E."/>
            <person name="Hayes P.K."/>
        </authorList>
    </citation>
    <scope>PROTEIN SEQUENCE OF 2-68</scope>
    <scope>SUBCELLULAR LOCATION</scope>
    <source>
        <strain>CCAP 1417/1</strain>
    </source>
</reference>